<feature type="chain" id="PRO_0000186852" description="Uncharacterized protein aq_328">
    <location>
        <begin position="1"/>
        <end position="171"/>
    </location>
</feature>
<feature type="helix" evidence="2">
    <location>
        <begin position="29"/>
        <end position="40"/>
    </location>
</feature>
<feature type="helix" evidence="2">
    <location>
        <begin position="46"/>
        <end position="62"/>
    </location>
</feature>
<feature type="turn" evidence="2">
    <location>
        <begin position="63"/>
        <end position="66"/>
    </location>
</feature>
<feature type="helix" evidence="2">
    <location>
        <begin position="67"/>
        <end position="73"/>
    </location>
</feature>
<feature type="strand" evidence="2">
    <location>
        <begin position="77"/>
        <end position="79"/>
    </location>
</feature>
<feature type="helix" evidence="2">
    <location>
        <begin position="81"/>
        <end position="83"/>
    </location>
</feature>
<feature type="helix" evidence="2">
    <location>
        <begin position="88"/>
        <end position="98"/>
    </location>
</feature>
<feature type="helix" evidence="2">
    <location>
        <begin position="106"/>
        <end position="113"/>
    </location>
</feature>
<feature type="strand" evidence="2">
    <location>
        <begin position="120"/>
        <end position="123"/>
    </location>
</feature>
<feature type="helix" evidence="2">
    <location>
        <begin position="125"/>
        <end position="128"/>
    </location>
</feature>
<feature type="helix" evidence="2">
    <location>
        <begin position="131"/>
        <end position="149"/>
    </location>
</feature>
<feature type="helix" evidence="2">
    <location>
        <begin position="157"/>
        <end position="168"/>
    </location>
</feature>
<organism>
    <name type="scientific">Aquifex aeolicus (strain VF5)</name>
    <dbReference type="NCBI Taxonomy" id="224324"/>
    <lineage>
        <taxon>Bacteria</taxon>
        <taxon>Pseudomonadati</taxon>
        <taxon>Aquificota</taxon>
        <taxon>Aquificia</taxon>
        <taxon>Aquificales</taxon>
        <taxon>Aquificaceae</taxon>
        <taxon>Aquifex</taxon>
    </lineage>
</organism>
<comment type="similarity">
    <text evidence="1">To A.aeolicus aq_616.</text>
</comment>
<dbReference type="EMBL" id="AE000657">
    <property type="protein sequence ID" value="AAC06630.1"/>
    <property type="molecule type" value="Genomic_DNA"/>
</dbReference>
<dbReference type="PIR" id="E70329">
    <property type="entry name" value="E70329"/>
</dbReference>
<dbReference type="RefSeq" id="NP_213225.1">
    <property type="nucleotide sequence ID" value="NC_000918.1"/>
</dbReference>
<dbReference type="PDB" id="1R4V">
    <property type="method" value="X-ray"/>
    <property type="resolution" value="1.90 A"/>
    <property type="chains" value="A=1-171"/>
</dbReference>
<dbReference type="PDBsum" id="1R4V"/>
<dbReference type="SMR" id="O66665"/>
<dbReference type="STRING" id="224324.aq_328"/>
<dbReference type="EnsemblBacteria" id="AAC06630">
    <property type="protein sequence ID" value="AAC06630"/>
    <property type="gene ID" value="aq_328"/>
</dbReference>
<dbReference type="KEGG" id="aae:aq_328"/>
<dbReference type="eggNOG" id="ENOG5031BBY">
    <property type="taxonomic scope" value="Bacteria"/>
</dbReference>
<dbReference type="HOGENOM" id="CLU_1559783_0_0_0"/>
<dbReference type="InParanoid" id="O66665"/>
<dbReference type="OrthoDB" id="14134at2"/>
<dbReference type="EvolutionaryTrace" id="O66665"/>
<dbReference type="Proteomes" id="UP000000798">
    <property type="component" value="Chromosome"/>
</dbReference>
<dbReference type="GO" id="GO:0046982">
    <property type="term" value="F:protein heterodimerization activity"/>
    <property type="evidence" value="ECO:0007669"/>
    <property type="project" value="InterPro"/>
</dbReference>
<dbReference type="CDD" id="cd22922">
    <property type="entry name" value="HFD_Aq328-like_rpt1"/>
    <property type="match status" value="1"/>
</dbReference>
<dbReference type="CDD" id="cd22923">
    <property type="entry name" value="HFD_Aq328-like_rpt2"/>
    <property type="match status" value="1"/>
</dbReference>
<dbReference type="Gene3D" id="1.10.20.10">
    <property type="entry name" value="Histone, subunit A"/>
    <property type="match status" value="1"/>
</dbReference>
<dbReference type="InterPro" id="IPR015207">
    <property type="entry name" value="DUF1931"/>
</dbReference>
<dbReference type="InterPro" id="IPR009072">
    <property type="entry name" value="Histone-fold"/>
</dbReference>
<dbReference type="Pfam" id="PF09123">
    <property type="entry name" value="DUF1931"/>
    <property type="match status" value="1"/>
</dbReference>
<dbReference type="SUPFAM" id="SSF47113">
    <property type="entry name" value="Histone-fold"/>
    <property type="match status" value="1"/>
</dbReference>
<protein>
    <recommendedName>
        <fullName>Uncharacterized protein aq_328</fullName>
    </recommendedName>
</protein>
<name>Y328_AQUAE</name>
<accession>O66665</accession>
<gene>
    <name type="ordered locus">aq_328</name>
</gene>
<keyword id="KW-0002">3D-structure</keyword>
<keyword id="KW-1185">Reference proteome</keyword>
<evidence type="ECO:0000305" key="1"/>
<evidence type="ECO:0007829" key="2">
    <source>
        <dbReference type="PDB" id="1R4V"/>
    </source>
</evidence>
<sequence>MQEKYNFGKVSSQHKNYSKIETMLRPKGFDKLDHYFRTELDIDLTDETIELLLNSVKAAFGKLFYGAEQRARWNGRDFIALADLNITKALEEHIKNFQKIEQDMGVDELLEYIAFIPPVEMNVGEDLKSEYRNIMGGLLLMHADVIKKATGERKPSREAMEFVAQIVDKVF</sequence>
<reference key="1">
    <citation type="journal article" date="1998" name="Nature">
        <title>The complete genome of the hyperthermophilic bacterium Aquifex aeolicus.</title>
        <authorList>
            <person name="Deckert G."/>
            <person name="Warren P.V."/>
            <person name="Gaasterland T."/>
            <person name="Young W.G."/>
            <person name="Lenox A.L."/>
            <person name="Graham D.E."/>
            <person name="Overbeek R."/>
            <person name="Snead M.A."/>
            <person name="Keller M."/>
            <person name="Aujay M."/>
            <person name="Huber R."/>
            <person name="Feldman R.A."/>
            <person name="Short J.M."/>
            <person name="Olsen G.J."/>
            <person name="Swanson R.V."/>
        </authorList>
    </citation>
    <scope>NUCLEOTIDE SEQUENCE [LARGE SCALE GENOMIC DNA]</scope>
    <source>
        <strain>VF5</strain>
    </source>
</reference>
<proteinExistence type="evidence at protein level"/>